<proteinExistence type="evidence at transcript level"/>
<feature type="transit peptide" description="Mitochondrion" evidence="3">
    <location>
        <begin position="1"/>
        <end status="unknown"/>
    </location>
</feature>
<feature type="chain" id="PRO_0000001713" description="Alternative oxidase, mitochondrial">
    <location>
        <begin status="unknown"/>
        <end position="356"/>
    </location>
</feature>
<feature type="transmembrane region" description="Helical" evidence="3">
    <location>
        <begin position="152"/>
        <end position="172"/>
    </location>
</feature>
<feature type="transmembrane region" description="Helical" evidence="3">
    <location>
        <begin position="217"/>
        <end position="237"/>
    </location>
</feature>
<feature type="region of interest" description="Disordered" evidence="4">
    <location>
        <begin position="330"/>
        <end position="356"/>
    </location>
</feature>
<feature type="binding site" evidence="2">
    <location>
        <position position="159"/>
    </location>
    <ligand>
        <name>Fe cation</name>
        <dbReference type="ChEBI" id="CHEBI:24875"/>
        <label>1</label>
    </ligand>
</feature>
<feature type="binding site" evidence="2">
    <location>
        <position position="198"/>
    </location>
    <ligand>
        <name>Fe cation</name>
        <dbReference type="ChEBI" id="CHEBI:24875"/>
        <label>1</label>
    </ligand>
</feature>
<feature type="binding site" evidence="2">
    <location>
        <position position="198"/>
    </location>
    <ligand>
        <name>Fe cation</name>
        <dbReference type="ChEBI" id="CHEBI:24875"/>
        <label>2</label>
    </ligand>
</feature>
<feature type="binding site" evidence="2">
    <location>
        <position position="201"/>
    </location>
    <ligand>
        <name>Fe cation</name>
        <dbReference type="ChEBI" id="CHEBI:24875"/>
        <label>1</label>
    </ligand>
</feature>
<feature type="binding site" evidence="2">
    <location>
        <position position="249"/>
    </location>
    <ligand>
        <name>Fe cation</name>
        <dbReference type="ChEBI" id="CHEBI:24875"/>
        <label>2</label>
    </ligand>
</feature>
<feature type="binding site" evidence="2">
    <location>
        <position position="304"/>
    </location>
    <ligand>
        <name>Fe cation</name>
        <dbReference type="ChEBI" id="CHEBI:24875"/>
        <label>1</label>
    </ligand>
</feature>
<feature type="binding site" evidence="2">
    <location>
        <position position="304"/>
    </location>
    <ligand>
        <name>Fe cation</name>
        <dbReference type="ChEBI" id="CHEBI:24875"/>
        <label>2</label>
    </ligand>
</feature>
<feature type="binding site" evidence="2">
    <location>
        <position position="307"/>
    </location>
    <ligand>
        <name>Fe cation</name>
        <dbReference type="ChEBI" id="CHEBI:24875"/>
        <label>2</label>
    </ligand>
</feature>
<dbReference type="EC" id="1.-.-.-"/>
<dbReference type="EMBL" id="AF133236">
    <property type="protein sequence ID" value="AAD29680.1"/>
    <property type="molecule type" value="mRNA"/>
</dbReference>
<dbReference type="EMBL" id="AF133237">
    <property type="protein sequence ID" value="AAD29681.1"/>
    <property type="molecule type" value="mRNA"/>
</dbReference>
<dbReference type="EMBL" id="AF543542">
    <property type="protein sequence ID" value="AAN33183.1"/>
    <property type="molecule type" value="Genomic_DNA"/>
</dbReference>
<dbReference type="SMR" id="Q9Y711"/>
<dbReference type="GO" id="GO:0005743">
    <property type="term" value="C:mitochondrial inner membrane"/>
    <property type="evidence" value="ECO:0007669"/>
    <property type="project" value="UniProtKB-SubCell"/>
</dbReference>
<dbReference type="GO" id="GO:0009916">
    <property type="term" value="F:alternative oxidase activity"/>
    <property type="evidence" value="ECO:0007669"/>
    <property type="project" value="InterPro"/>
</dbReference>
<dbReference type="GO" id="GO:0046872">
    <property type="term" value="F:metal ion binding"/>
    <property type="evidence" value="ECO:0007669"/>
    <property type="project" value="UniProtKB-KW"/>
</dbReference>
<dbReference type="GO" id="GO:0010230">
    <property type="term" value="P:alternative respiration"/>
    <property type="evidence" value="ECO:0007669"/>
    <property type="project" value="TreeGrafter"/>
</dbReference>
<dbReference type="CDD" id="cd01053">
    <property type="entry name" value="AOX"/>
    <property type="match status" value="1"/>
</dbReference>
<dbReference type="FunFam" id="1.20.1260.140:FF:000002">
    <property type="entry name" value="Alternative oxidase"/>
    <property type="match status" value="1"/>
</dbReference>
<dbReference type="Gene3D" id="1.20.1260.140">
    <property type="entry name" value="Alternative oxidase"/>
    <property type="match status" value="1"/>
</dbReference>
<dbReference type="InterPro" id="IPR002680">
    <property type="entry name" value="AOX"/>
</dbReference>
<dbReference type="InterPro" id="IPR038659">
    <property type="entry name" value="AOX_sf"/>
</dbReference>
<dbReference type="PANTHER" id="PTHR31803">
    <property type="entry name" value="ALTERNATIVE OXIDASE"/>
    <property type="match status" value="1"/>
</dbReference>
<dbReference type="PANTHER" id="PTHR31803:SF3">
    <property type="entry name" value="ALTERNATIVE OXIDASE"/>
    <property type="match status" value="1"/>
</dbReference>
<dbReference type="Pfam" id="PF01786">
    <property type="entry name" value="AOX"/>
    <property type="match status" value="1"/>
</dbReference>
<dbReference type="PIRSF" id="PIRSF005229">
    <property type="entry name" value="AOX"/>
    <property type="match status" value="1"/>
</dbReference>
<accession>Q9Y711</accession>
<protein>
    <recommendedName>
        <fullName>Alternative oxidase, mitochondrial</fullName>
        <ecNumber>1.-.-.-</ecNumber>
    </recommendedName>
</protein>
<evidence type="ECO:0000250" key="1"/>
<evidence type="ECO:0000250" key="2">
    <source>
        <dbReference type="UniProtKB" id="Q26710"/>
    </source>
</evidence>
<evidence type="ECO:0000255" key="3"/>
<evidence type="ECO:0000256" key="4">
    <source>
        <dbReference type="SAM" id="MobiDB-lite"/>
    </source>
</evidence>
<evidence type="ECO:0000305" key="5"/>
<keyword id="KW-0249">Electron transport</keyword>
<keyword id="KW-0408">Iron</keyword>
<keyword id="KW-0472">Membrane</keyword>
<keyword id="KW-0479">Metal-binding</keyword>
<keyword id="KW-0496">Mitochondrion</keyword>
<keyword id="KW-0999">Mitochondrion inner membrane</keyword>
<keyword id="KW-0560">Oxidoreductase</keyword>
<keyword id="KW-0679">Respiratory chain</keyword>
<keyword id="KW-0809">Transit peptide</keyword>
<keyword id="KW-0812">Transmembrane</keyword>
<keyword id="KW-1133">Transmembrane helix</keyword>
<keyword id="KW-0813">Transport</keyword>
<sequence>MYPTSGCARVLMACPAPAMLRGPLLRPSTTAIRGLRGSPLLYHYAATSNSNMRYFSSTSRRWIKEFFAPPKETDHIVESVTTWKHPVFTEKQMKEIAIAHREAKNWSDWVALGTVRFLRWATDLATGYRHAAPGKQGVEVPEQFQMTERKWVIRFIFLETVAGVPGMVGGMLRHLRSLRRMKRDNGWIETLLEEAYNERMHLLSFLKLAQPGWFMRLMVLGAQGVFFNGFFISYLISPRTCHRFVGYLEEEAVMTYTHAIKDLESGKLPNWANQPAPDIAVAYWQMPEGKRTILDLLYYIRADEAKHREVNHTLANLKQGVDPNPYAAKYDNPEAPHPTKSAEIVKPTGWERDEVI</sequence>
<organism>
    <name type="scientific">Ajellomyces capsulatus</name>
    <name type="common">Darling's disease fungus</name>
    <name type="synonym">Histoplasma capsulatum</name>
    <dbReference type="NCBI Taxonomy" id="5037"/>
    <lineage>
        <taxon>Eukaryota</taxon>
        <taxon>Fungi</taxon>
        <taxon>Dikarya</taxon>
        <taxon>Ascomycota</taxon>
        <taxon>Pezizomycotina</taxon>
        <taxon>Eurotiomycetes</taxon>
        <taxon>Eurotiomycetidae</taxon>
        <taxon>Onygenales</taxon>
        <taxon>Ajellomycetaceae</taxon>
        <taxon>Histoplasma</taxon>
    </lineage>
</organism>
<gene>
    <name type="primary">AOX1</name>
</gene>
<reference key="1">
    <citation type="journal article" date="2003" name="Yeast">
        <title>Characterization of an alternative oxidase activity of Histoplasma capsulatum.</title>
        <authorList>
            <person name="Johnson C.H."/>
            <person name="Prigge J.T."/>
            <person name="Warren A.D."/>
            <person name="McEwen J.E."/>
        </authorList>
    </citation>
    <scope>NUCLEOTIDE SEQUENCE [MRNA]</scope>
    <source>
        <strain>ATCC 26032 / G217B</strain>
    </source>
</reference>
<comment type="function">
    <text evidence="1">Catalyzes cyanide-resistant oxygen consumption. May increase respiration when the cytochrome respiratory pathway is restricted, or in response to low temperatures (By similarity).</text>
</comment>
<comment type="cofactor">
    <cofactor evidence="2">
        <name>Fe cation</name>
        <dbReference type="ChEBI" id="CHEBI:24875"/>
    </cofactor>
    <text evidence="2">Binds 2 iron ions per subunit.</text>
</comment>
<comment type="subcellular location">
    <subcellularLocation>
        <location evidence="1">Mitochondrion inner membrane</location>
        <topology evidence="1">Multi-pass membrane protein</topology>
        <orientation evidence="1">Matrix side</orientation>
    </subcellularLocation>
</comment>
<comment type="similarity">
    <text evidence="5">Belongs to the alternative oxidase family.</text>
</comment>
<name>AOX_AJECA</name>